<keyword id="KW-0547">Nucleotide-binding</keyword>
<sequence length="160" mass="17977">MPAFDIVSEVDNVELKNAVDNATRELATRFDFRGVDASFELKGENIKIKAEDDFQLSQLVDILRGNLAKRGVDARAMDIKDAVHSGKNFYQDIDFKQGVDTLIAKKLVKEIKASNIKVQAAIQGEQLRITGKKRDDLQAVMALVREGDFGQPFQFTNFRD</sequence>
<accession>B5FDX9</accession>
<evidence type="ECO:0000255" key="1">
    <source>
        <dbReference type="HAMAP-Rule" id="MF_00632"/>
    </source>
</evidence>
<reference key="1">
    <citation type="submission" date="2008-08" db="EMBL/GenBank/DDBJ databases">
        <title>Complete sequence of Vibrio fischeri strain MJ11.</title>
        <authorList>
            <person name="Mandel M.J."/>
            <person name="Stabb E.V."/>
            <person name="Ruby E.G."/>
            <person name="Ferriera S."/>
            <person name="Johnson J."/>
            <person name="Kravitz S."/>
            <person name="Beeson K."/>
            <person name="Sutton G."/>
            <person name="Rogers Y.-H."/>
            <person name="Friedman R."/>
            <person name="Frazier M."/>
            <person name="Venter J.C."/>
        </authorList>
    </citation>
    <scope>NUCLEOTIDE SEQUENCE [LARGE SCALE GENOMIC DNA]</scope>
    <source>
        <strain>MJ11</strain>
    </source>
</reference>
<gene>
    <name type="ordered locus">VFMJ11_1323</name>
</gene>
<organism>
    <name type="scientific">Aliivibrio fischeri (strain MJ11)</name>
    <name type="common">Vibrio fischeri</name>
    <dbReference type="NCBI Taxonomy" id="388396"/>
    <lineage>
        <taxon>Bacteria</taxon>
        <taxon>Pseudomonadati</taxon>
        <taxon>Pseudomonadota</taxon>
        <taxon>Gammaproteobacteria</taxon>
        <taxon>Vibrionales</taxon>
        <taxon>Vibrionaceae</taxon>
        <taxon>Aliivibrio</taxon>
    </lineage>
</organism>
<dbReference type="EMBL" id="CP001139">
    <property type="protein sequence ID" value="ACH66315.1"/>
    <property type="molecule type" value="Genomic_DNA"/>
</dbReference>
<dbReference type="RefSeq" id="WP_012533643.1">
    <property type="nucleotide sequence ID" value="NC_011184.1"/>
</dbReference>
<dbReference type="SMR" id="B5FDX9"/>
<dbReference type="KEGG" id="vfm:VFMJ11_1323"/>
<dbReference type="HOGENOM" id="CLU_099839_1_0_6"/>
<dbReference type="Proteomes" id="UP000001857">
    <property type="component" value="Chromosome I"/>
</dbReference>
<dbReference type="GO" id="GO:0005829">
    <property type="term" value="C:cytosol"/>
    <property type="evidence" value="ECO:0007669"/>
    <property type="project" value="TreeGrafter"/>
</dbReference>
<dbReference type="GO" id="GO:0000166">
    <property type="term" value="F:nucleotide binding"/>
    <property type="evidence" value="ECO:0007669"/>
    <property type="project" value="TreeGrafter"/>
</dbReference>
<dbReference type="CDD" id="cd11740">
    <property type="entry name" value="YajQ_like"/>
    <property type="match status" value="1"/>
</dbReference>
<dbReference type="FunFam" id="3.30.70.860:FF:000001">
    <property type="entry name" value="UPF0234 protein YajQ"/>
    <property type="match status" value="1"/>
</dbReference>
<dbReference type="FunFam" id="3.30.70.990:FF:000001">
    <property type="entry name" value="UPF0234 protein YajQ"/>
    <property type="match status" value="1"/>
</dbReference>
<dbReference type="Gene3D" id="3.30.70.860">
    <property type="match status" value="1"/>
</dbReference>
<dbReference type="Gene3D" id="3.30.70.990">
    <property type="entry name" value="YajQ-like, domain 2"/>
    <property type="match status" value="1"/>
</dbReference>
<dbReference type="HAMAP" id="MF_00632">
    <property type="entry name" value="YajQ"/>
    <property type="match status" value="1"/>
</dbReference>
<dbReference type="InterPro" id="IPR007551">
    <property type="entry name" value="DUF520"/>
</dbReference>
<dbReference type="InterPro" id="IPR035571">
    <property type="entry name" value="UPF0234-like_C"/>
</dbReference>
<dbReference type="InterPro" id="IPR035570">
    <property type="entry name" value="UPF0234_N"/>
</dbReference>
<dbReference type="InterPro" id="IPR036183">
    <property type="entry name" value="YajQ-like_sf"/>
</dbReference>
<dbReference type="NCBIfam" id="NF003819">
    <property type="entry name" value="PRK05412.1"/>
    <property type="match status" value="1"/>
</dbReference>
<dbReference type="PANTHER" id="PTHR30476">
    <property type="entry name" value="UPF0234 PROTEIN YAJQ"/>
    <property type="match status" value="1"/>
</dbReference>
<dbReference type="PANTHER" id="PTHR30476:SF0">
    <property type="entry name" value="UPF0234 PROTEIN YAJQ"/>
    <property type="match status" value="1"/>
</dbReference>
<dbReference type="Pfam" id="PF04461">
    <property type="entry name" value="DUF520"/>
    <property type="match status" value="1"/>
</dbReference>
<dbReference type="SUPFAM" id="SSF89963">
    <property type="entry name" value="YajQ-like"/>
    <property type="match status" value="2"/>
</dbReference>
<protein>
    <recommendedName>
        <fullName evidence="1">Nucleotide-binding protein VFMJ11_1323</fullName>
    </recommendedName>
</protein>
<comment type="function">
    <text evidence="1">Nucleotide-binding protein.</text>
</comment>
<comment type="similarity">
    <text evidence="1">Belongs to the YajQ family.</text>
</comment>
<feature type="chain" id="PRO_1000130657" description="Nucleotide-binding protein VFMJ11_1323">
    <location>
        <begin position="1"/>
        <end position="160"/>
    </location>
</feature>
<name>Y1323_ALIFM</name>
<proteinExistence type="inferred from homology"/>